<proteinExistence type="evidence at protein level"/>
<reference key="1">
    <citation type="journal article" date="1996" name="Microbiology">
        <title>Systematic sequencing of the 283 kb 210 degrees-232 degrees region of the Bacillus subtilis genome containing the skin element and many sporulation genes.</title>
        <authorList>
            <person name="Mizuno M."/>
            <person name="Masuda S."/>
            <person name="Takemaru K."/>
            <person name="Hosono S."/>
            <person name="Sato T."/>
            <person name="Takeuchi M."/>
            <person name="Kobayashi Y."/>
        </authorList>
    </citation>
    <scope>NUCLEOTIDE SEQUENCE [GENOMIC DNA]</scope>
    <source>
        <strain>168 / JH642</strain>
    </source>
</reference>
<reference key="2">
    <citation type="journal article" date="1997" name="Nature">
        <title>The complete genome sequence of the Gram-positive bacterium Bacillus subtilis.</title>
        <authorList>
            <person name="Kunst F."/>
            <person name="Ogasawara N."/>
            <person name="Moszer I."/>
            <person name="Albertini A.M."/>
            <person name="Alloni G."/>
            <person name="Azevedo V."/>
            <person name="Bertero M.G."/>
            <person name="Bessieres P."/>
            <person name="Bolotin A."/>
            <person name="Borchert S."/>
            <person name="Borriss R."/>
            <person name="Boursier L."/>
            <person name="Brans A."/>
            <person name="Braun M."/>
            <person name="Brignell S.C."/>
            <person name="Bron S."/>
            <person name="Brouillet S."/>
            <person name="Bruschi C.V."/>
            <person name="Caldwell B."/>
            <person name="Capuano V."/>
            <person name="Carter N.M."/>
            <person name="Choi S.-K."/>
            <person name="Codani J.-J."/>
            <person name="Connerton I.F."/>
            <person name="Cummings N.J."/>
            <person name="Daniel R.A."/>
            <person name="Denizot F."/>
            <person name="Devine K.M."/>
            <person name="Duesterhoeft A."/>
            <person name="Ehrlich S.D."/>
            <person name="Emmerson P.T."/>
            <person name="Entian K.-D."/>
            <person name="Errington J."/>
            <person name="Fabret C."/>
            <person name="Ferrari E."/>
            <person name="Foulger D."/>
            <person name="Fritz C."/>
            <person name="Fujita M."/>
            <person name="Fujita Y."/>
            <person name="Fuma S."/>
            <person name="Galizzi A."/>
            <person name="Galleron N."/>
            <person name="Ghim S.-Y."/>
            <person name="Glaser P."/>
            <person name="Goffeau A."/>
            <person name="Golightly E.J."/>
            <person name="Grandi G."/>
            <person name="Guiseppi G."/>
            <person name="Guy B.J."/>
            <person name="Haga K."/>
            <person name="Haiech J."/>
            <person name="Harwood C.R."/>
            <person name="Henaut A."/>
            <person name="Hilbert H."/>
            <person name="Holsappel S."/>
            <person name="Hosono S."/>
            <person name="Hullo M.-F."/>
            <person name="Itaya M."/>
            <person name="Jones L.-M."/>
            <person name="Joris B."/>
            <person name="Karamata D."/>
            <person name="Kasahara Y."/>
            <person name="Klaerr-Blanchard M."/>
            <person name="Klein C."/>
            <person name="Kobayashi Y."/>
            <person name="Koetter P."/>
            <person name="Koningstein G."/>
            <person name="Krogh S."/>
            <person name="Kumano M."/>
            <person name="Kurita K."/>
            <person name="Lapidus A."/>
            <person name="Lardinois S."/>
            <person name="Lauber J."/>
            <person name="Lazarevic V."/>
            <person name="Lee S.-M."/>
            <person name="Levine A."/>
            <person name="Liu H."/>
            <person name="Masuda S."/>
            <person name="Mauel C."/>
            <person name="Medigue C."/>
            <person name="Medina N."/>
            <person name="Mellado R.P."/>
            <person name="Mizuno M."/>
            <person name="Moestl D."/>
            <person name="Nakai S."/>
            <person name="Noback M."/>
            <person name="Noone D."/>
            <person name="O'Reilly M."/>
            <person name="Ogawa K."/>
            <person name="Ogiwara A."/>
            <person name="Oudega B."/>
            <person name="Park S.-H."/>
            <person name="Parro V."/>
            <person name="Pohl T.M."/>
            <person name="Portetelle D."/>
            <person name="Porwollik S."/>
            <person name="Prescott A.M."/>
            <person name="Presecan E."/>
            <person name="Pujic P."/>
            <person name="Purnelle B."/>
            <person name="Rapoport G."/>
            <person name="Rey M."/>
            <person name="Reynolds S."/>
            <person name="Rieger M."/>
            <person name="Rivolta C."/>
            <person name="Rocha E."/>
            <person name="Roche B."/>
            <person name="Rose M."/>
            <person name="Sadaie Y."/>
            <person name="Sato T."/>
            <person name="Scanlan E."/>
            <person name="Schleich S."/>
            <person name="Schroeter R."/>
            <person name="Scoffone F."/>
            <person name="Sekiguchi J."/>
            <person name="Sekowska A."/>
            <person name="Seror S.J."/>
            <person name="Serror P."/>
            <person name="Shin B.-S."/>
            <person name="Soldo B."/>
            <person name="Sorokin A."/>
            <person name="Tacconi E."/>
            <person name="Takagi T."/>
            <person name="Takahashi H."/>
            <person name="Takemaru K."/>
            <person name="Takeuchi M."/>
            <person name="Tamakoshi A."/>
            <person name="Tanaka T."/>
            <person name="Terpstra P."/>
            <person name="Tognoni A."/>
            <person name="Tosato V."/>
            <person name="Uchiyama S."/>
            <person name="Vandenbol M."/>
            <person name="Vannier F."/>
            <person name="Vassarotti A."/>
            <person name="Viari A."/>
            <person name="Wambutt R."/>
            <person name="Wedler E."/>
            <person name="Wedler H."/>
            <person name="Weitzenegger T."/>
            <person name="Winters P."/>
            <person name="Wipat A."/>
            <person name="Yamamoto H."/>
            <person name="Yamane K."/>
            <person name="Yasumoto K."/>
            <person name="Yata K."/>
            <person name="Yoshida K."/>
            <person name="Yoshikawa H.-F."/>
            <person name="Zumstein E."/>
            <person name="Yoshikawa H."/>
            <person name="Danchin A."/>
        </authorList>
    </citation>
    <scope>NUCLEOTIDE SEQUENCE [LARGE SCALE GENOMIC DNA]</scope>
    <source>
        <strain>168</strain>
    </source>
</reference>
<reference key="3">
    <citation type="journal article" date="1998" name="Genes Dev.">
        <title>Functional analysis of the secretory precursor processing machinery of Bacillus subtilis: identification of a eubacterial homolog of archaeal and eukaryotic signal peptidases.</title>
        <authorList>
            <person name="Tjalsma H."/>
            <person name="Bolhuis A."/>
            <person name="van Roosmalen M.L."/>
            <person name="Wiegert T."/>
            <person name="Schumann W."/>
            <person name="Broekhuizen C.P."/>
            <person name="Quax W.J."/>
            <person name="Venema G."/>
            <person name="Bron S."/>
            <person name="van Dijl J.M."/>
        </authorList>
    </citation>
    <scope>CATALYTIC ACTIVITY</scope>
    <scope>INDUCTION</scope>
</reference>
<reference key="4">
    <citation type="journal article" date="1998" name="J. Biotechnol.">
        <title>Protein secretion and possible roles for multiple signal peptidases for precursor processing in bacilli.</title>
        <authorList>
            <person name="Bron S."/>
            <person name="Bolhuis A."/>
            <person name="Tjalsma H."/>
            <person name="Holsappel S."/>
            <person name="Venema G."/>
            <person name="van Dijl J.M."/>
        </authorList>
    </citation>
    <scope>REVIEW</scope>
</reference>
<reference key="5">
    <citation type="journal article" date="1999" name="J. Bacteriol.">
        <title>Secretion, localization, and antibacterial activity of TasA, a Bacillus subtilis spore-associated protein.</title>
        <authorList>
            <person name="Stoever A.G."/>
            <person name="Driks A."/>
        </authorList>
    </citation>
    <scope>FUNCTION</scope>
    <source>
        <strain>168</strain>
    </source>
</reference>
<reference key="6">
    <citation type="journal article" date="1999" name="J. Bacteriol.">
        <title>Regulation of synthesis of the Bacillus subtilis transition-phase, spore-associated antibacterial protein TasA.</title>
        <authorList>
            <person name="Stoever A.G."/>
            <person name="Driks A."/>
        </authorList>
    </citation>
    <scope>INDUCTION</scope>
</reference>
<reference key="7">
    <citation type="journal article" date="1999" name="J. Bacteriol.">
        <title>Control of synthesis and secretion of the Bacillus subtilis protein YqxM.</title>
        <authorList>
            <person name="Stoever A.G."/>
            <person name="Driks A."/>
        </authorList>
    </citation>
    <scope>FUNCTION</scope>
</reference>
<reference key="8">
    <citation type="journal article" date="2006" name="Mol. Microbiol.">
        <title>Targets of the master regulator of biofilm formation in Bacillus subtilis.</title>
        <authorList>
            <person name="Chu F."/>
            <person name="Kearns D.B."/>
            <person name="Branda S.S."/>
            <person name="Kolter R."/>
            <person name="Losick R."/>
        </authorList>
    </citation>
    <scope>FUNCTION</scope>
    <scope>REPRESSION BY SINR</scope>
    <scope>DISRUPTION PHENOTYPE</scope>
</reference>
<reference key="9">
    <citation type="journal article" date="2013" name="Mol. Microbiol.">
        <title>RemA is a DNA-binding protein that activates biofilm matrix gene expression in Bacillus subtilis.</title>
        <authorList>
            <person name="Winkelman J.T."/>
            <person name="Bree A.C."/>
            <person name="Bate A.R."/>
            <person name="Eichenberger P."/>
            <person name="Gourse R.L."/>
            <person name="Kearns D.B."/>
        </authorList>
    </citation>
    <scope>INDUCTION BY REMA</scope>
</reference>
<evidence type="ECO:0000250" key="1"/>
<evidence type="ECO:0000255" key="2"/>
<evidence type="ECO:0000269" key="3">
    <source>
    </source>
</evidence>
<evidence type="ECO:0000269" key="4">
    <source>
    </source>
</evidence>
<evidence type="ECO:0000269" key="5">
    <source>
    </source>
</evidence>
<evidence type="ECO:0000269" key="6">
    <source>
    </source>
</evidence>
<evidence type="ECO:0000269" key="7">
    <source>
    </source>
</evidence>
<evidence type="ECO:0000269" key="8">
    <source>
    </source>
</evidence>
<evidence type="ECO:0000303" key="9">
    <source>
    </source>
</evidence>
<evidence type="ECO:0000305" key="10"/>
<accession>P54506</accession>
<gene>
    <name evidence="9" type="primary">sipW</name>
    <name type="synonym">yqhE</name>
    <name type="ordered locus">BSU24630</name>
</gene>
<organism>
    <name type="scientific">Bacillus subtilis (strain 168)</name>
    <dbReference type="NCBI Taxonomy" id="224308"/>
    <lineage>
        <taxon>Bacteria</taxon>
        <taxon>Bacillati</taxon>
        <taxon>Bacillota</taxon>
        <taxon>Bacilli</taxon>
        <taxon>Bacillales</taxon>
        <taxon>Bacillaceae</taxon>
        <taxon>Bacillus</taxon>
    </lineage>
</organism>
<dbReference type="EC" id="3.4.21.89" evidence="8"/>
<dbReference type="EMBL" id="D84432">
    <property type="protein sequence ID" value="BAA12540.1"/>
    <property type="molecule type" value="Genomic_DNA"/>
</dbReference>
<dbReference type="EMBL" id="AL009126">
    <property type="protein sequence ID" value="CAB14394.1"/>
    <property type="molecule type" value="Genomic_DNA"/>
</dbReference>
<dbReference type="PIR" id="B69708">
    <property type="entry name" value="B69708"/>
</dbReference>
<dbReference type="RefSeq" id="NP_390343.1">
    <property type="nucleotide sequence ID" value="NC_000964.3"/>
</dbReference>
<dbReference type="RefSeq" id="WP_003246088.1">
    <property type="nucleotide sequence ID" value="NZ_OZ025638.1"/>
</dbReference>
<dbReference type="FunCoup" id="P54506">
    <property type="interactions" value="87"/>
</dbReference>
<dbReference type="STRING" id="224308.BSU24630"/>
<dbReference type="MEROPS" id="S26.011"/>
<dbReference type="PaxDb" id="224308-BSU24630"/>
<dbReference type="EnsemblBacteria" id="CAB14394">
    <property type="protein sequence ID" value="CAB14394"/>
    <property type="gene ID" value="BSU_24630"/>
</dbReference>
<dbReference type="GeneID" id="938542"/>
<dbReference type="KEGG" id="bsu:BSU24630"/>
<dbReference type="PATRIC" id="fig|224308.43.peg.2570"/>
<dbReference type="eggNOG" id="COG0681">
    <property type="taxonomic scope" value="Bacteria"/>
</dbReference>
<dbReference type="InParanoid" id="P54506"/>
<dbReference type="OrthoDB" id="2243765at2"/>
<dbReference type="PhylomeDB" id="P54506"/>
<dbReference type="BioCyc" id="BSUB:BSU24630-MONOMER"/>
<dbReference type="Proteomes" id="UP000001570">
    <property type="component" value="Chromosome"/>
</dbReference>
<dbReference type="GO" id="GO:0005886">
    <property type="term" value="C:plasma membrane"/>
    <property type="evidence" value="ECO:0007669"/>
    <property type="project" value="UniProtKB-SubCell"/>
</dbReference>
<dbReference type="GO" id="GO:0004252">
    <property type="term" value="F:serine-type endopeptidase activity"/>
    <property type="evidence" value="ECO:0007669"/>
    <property type="project" value="UniProtKB-EC"/>
</dbReference>
<dbReference type="GO" id="GO:0006465">
    <property type="term" value="P:signal peptide processing"/>
    <property type="evidence" value="ECO:0007669"/>
    <property type="project" value="InterPro"/>
</dbReference>
<dbReference type="CDD" id="cd06530">
    <property type="entry name" value="S26_SPase_I"/>
    <property type="match status" value="1"/>
</dbReference>
<dbReference type="Gene3D" id="2.10.109.10">
    <property type="entry name" value="Umud Fragment, subunit A"/>
    <property type="match status" value="1"/>
</dbReference>
<dbReference type="InterPro" id="IPR036286">
    <property type="entry name" value="LexA/Signal_pep-like_sf"/>
</dbReference>
<dbReference type="InterPro" id="IPR019533">
    <property type="entry name" value="Peptidase_S26"/>
</dbReference>
<dbReference type="InterPro" id="IPR001733">
    <property type="entry name" value="Peptidase_S26B"/>
</dbReference>
<dbReference type="NCBIfam" id="TIGR02228">
    <property type="entry name" value="sigpep_I_arch"/>
    <property type="match status" value="1"/>
</dbReference>
<dbReference type="NCBIfam" id="NF046067">
    <property type="entry name" value="SigPepSipWBacil"/>
    <property type="match status" value="1"/>
</dbReference>
<dbReference type="PANTHER" id="PTHR10806">
    <property type="entry name" value="SIGNAL PEPTIDASE COMPLEX CATALYTIC SUBUNIT SEC11"/>
    <property type="match status" value="1"/>
</dbReference>
<dbReference type="PANTHER" id="PTHR10806:SF6">
    <property type="entry name" value="SIGNAL PEPTIDASE COMPLEX CATALYTIC SUBUNIT SEC11"/>
    <property type="match status" value="1"/>
</dbReference>
<dbReference type="PRINTS" id="PR00728">
    <property type="entry name" value="SIGNALPTASE"/>
</dbReference>
<dbReference type="SUPFAM" id="SSF51306">
    <property type="entry name" value="LexA/Signal peptidase"/>
    <property type="match status" value="1"/>
</dbReference>
<feature type="chain" id="PRO_0000109539" description="Signal peptidase I W">
    <location>
        <begin position="1"/>
        <end position="190"/>
    </location>
</feature>
<feature type="transmembrane region" description="Helical" evidence="2">
    <location>
        <begin position="4"/>
        <end position="24"/>
    </location>
</feature>
<feature type="transmembrane region" description="Helical" evidence="2">
    <location>
        <begin position="143"/>
        <end position="163"/>
    </location>
</feature>
<feature type="active site" evidence="1">
    <location>
        <position position="45"/>
    </location>
</feature>
<protein>
    <recommendedName>
        <fullName>Signal peptidase I W</fullName>
        <shortName>SPase I</shortName>
        <ecNumber evidence="8">3.4.21.89</ecNumber>
    </recommendedName>
    <alternativeName>
        <fullName>Leader peptidase I</fullName>
    </alternativeName>
</protein>
<sequence length="190" mass="20678">MKLISNILYVIIFTLIIVLTLVVISTRSSGGEPAVFGYTLKSVLSGSMEPEFNTGSLILVKEITDVKELQKGDVITFMQDANTAVTHRIVDITKQGDHLLFKTKGDNNAAADSAPVSDENVRAQYTGFQLPYAGYMLHFASQPIGTAVLLIVPGVMLLVYAFVTISSAIREIERKTKALETDTKDSTMST</sequence>
<keyword id="KW-1003">Cell membrane</keyword>
<keyword id="KW-0378">Hydrolase</keyword>
<keyword id="KW-0472">Membrane</keyword>
<keyword id="KW-0645">Protease</keyword>
<keyword id="KW-1185">Reference proteome</keyword>
<keyword id="KW-0812">Transmembrane</keyword>
<keyword id="KW-1133">Transmembrane helix</keyword>
<name>LEPW_BACSU</name>
<comment type="function">
    <text evidence="3 5 6">Required for the cleavage of the signal sequence of TasA and TapA, which are involved in biofilm formation.</text>
</comment>
<comment type="catalytic activity">
    <reaction evidence="8">
        <text>Cleavage of hydrophobic, N-terminal signal or leader sequences from secreted and periplasmic proteins.</text>
        <dbReference type="EC" id="3.4.21.89"/>
    </reaction>
</comment>
<comment type="subcellular location">
    <subcellularLocation>
        <location evidence="10">Cell membrane</location>
        <topology evidence="2">Multi-pass membrane protein</topology>
    </subcellularLocation>
</comment>
<comment type="induction">
    <text evidence="4 6 7 8">Part of the tapA-sipW-tasA operon (PubMed:10464223). Expression is directly repressed by the DNA-binding protein master regulator of biofilm formation SinR and activated by the extracellular matrix regulatory protein RemA (PubMed:16430695, PubMed:23646920). Expressed constitutively at a low level (PubMed:9694797). Also positively regulated by the sporulation transcription factors sigma H and Spo0A and repressed by the transition phase regulatory protein AbrB, probably indirectly (PubMed:10464223).</text>
</comment>
<comment type="disruption phenotype">
    <text evidence="6">Mutation impairs colony surface architecture.</text>
</comment>
<comment type="miscellaneous">
    <text evidence="10">B.subtilis contains five chromosomal type I signal peptidases: SipS, SipT, SipU, SipV and SipW. They have different, but overlapping, substrate specificities and have different transcription patterns.</text>
</comment>
<comment type="similarity">
    <text evidence="10">Belongs to the peptidase S26B family.</text>
</comment>